<comment type="function">
    <text evidence="1 2 5 6">Selectively catalyzes the oxidative deamination of acidic amino acids (PubMed:16751595, PubMed:17234685). Suppresses the level of D-aspartate in the brain, an amino acid that can act as an agonist for glutamate receptors (By similarity). Protects the organism from the toxicity of D-amino acids (By similarity). May also function in the intestine (By similarity).</text>
</comment>
<comment type="catalytic activity">
    <reaction evidence="5 6">
        <text>D-aspartate + O2 + H2O = oxaloacetate + H2O2 + NH4(+)</text>
        <dbReference type="Rhea" id="RHEA:12512"/>
        <dbReference type="ChEBI" id="CHEBI:15377"/>
        <dbReference type="ChEBI" id="CHEBI:15379"/>
        <dbReference type="ChEBI" id="CHEBI:16240"/>
        <dbReference type="ChEBI" id="CHEBI:16452"/>
        <dbReference type="ChEBI" id="CHEBI:28938"/>
        <dbReference type="ChEBI" id="CHEBI:29990"/>
        <dbReference type="EC" id="1.4.3.1"/>
    </reaction>
    <physiologicalReaction direction="left-to-right" evidence="5 6">
        <dbReference type="Rhea" id="RHEA:12513"/>
    </physiologicalReaction>
</comment>
<comment type="catalytic activity">
    <reaction evidence="6">
        <text>D-glutamate + O2 + H2O = H2O2 + 2-oxoglutarate + NH4(+)</text>
        <dbReference type="Rhea" id="RHEA:10028"/>
        <dbReference type="ChEBI" id="CHEBI:15377"/>
        <dbReference type="ChEBI" id="CHEBI:15379"/>
        <dbReference type="ChEBI" id="CHEBI:16240"/>
        <dbReference type="ChEBI" id="CHEBI:16810"/>
        <dbReference type="ChEBI" id="CHEBI:28938"/>
        <dbReference type="ChEBI" id="CHEBI:29986"/>
    </reaction>
    <physiologicalReaction direction="left-to-right" evidence="6">
        <dbReference type="Rhea" id="RHEA:10029"/>
    </physiologicalReaction>
</comment>
<comment type="cofactor">
    <cofactor evidence="6">
        <name>FAD</name>
        <dbReference type="ChEBI" id="CHEBI:57692"/>
    </cofactor>
</comment>
<comment type="biophysicochemical properties">
    <kinetics>
        <KM evidence="6">0.613 mM for D-aspartate (at 37 degrees Celsius and at pH 8.3)</KM>
        <KM evidence="5">2.2 mM for D-aspartate (at 25 degrees Celsius and at pH 8.3)</KM>
        <KM evidence="6">0.547 mM for D-glutamate (at 37 degrees Celsius and at pH 8.3)</KM>
        <KM evidence="6">2.01 mM for N-methyl D-aspartate (at 37 degrees Celsius and at pH 8.3)</KM>
        <text evidence="5 6">kcat is 172 sec(-1) with D-aspartate as substrate (at 37 degrees Celsius and at pH 8.3) (PubMed:17234685). kcat is 46.7 sec(-1) with D-aspartate as substrate (at 25 degrees Celsius and at pH 8.3) (PubMed:16751595). kcat is 30 sec(-1) with D-glutamate as substrate (at 37 degrees Celsius and at pH 8.3) (PubMed:17234685). kcat is 635 sec(-1) with N-methyl D-aspartate as substrate (at 37 degrees Celsius and at pH 8.3) (PubMed:17234685).</text>
    </kinetics>
    <phDependence>
        <text evidence="6">Optimum pH is 7.5 to 9.0.</text>
    </phDependence>
</comment>
<comment type="subunit">
    <text evidence="3 6 9">Homotetramer (PubMed:17234685, PubMed:22684060). Interacts with PEX5; the interaction is direct and required for localization of DDO to the peroxisome (By similarity).</text>
</comment>
<comment type="subcellular location">
    <subcellularLocation>
        <location evidence="11 12">Peroxisome matrix</location>
    </subcellularLocation>
    <subcellularLocation>
        <location evidence="3">Cytoplasm</location>
        <location evidence="3">Cytosol</location>
    </subcellularLocation>
    <text evidence="3">Active in the peroxisomal matrix.</text>
</comment>
<comment type="tissue specificity">
    <text evidence="7 8">Expressed in epithelial cells of the renal proximal tubules (not detected in the glomeruli or renal distal tubules), liver, right atrium of heart, lung, chief cells of the gastric mucosa, choroid plexus, pia mater, brain stem, midbrain, pons, medulla oblongata, hypothalamus, hippocampus, cerebral cortex, cerebellum, ependyma, olfactory bulb and the pituitary, pineal, thyroid and adrenal glands (at protein level).</text>
</comment>
<comment type="mass spectrometry" mass="37000.0" method="MALDI" evidence="6">
    <text>Mass per subunit in the homotetramer.</text>
</comment>
<comment type="similarity">
    <text evidence="10">Belongs to the DAMOX/DASOX family.</text>
</comment>
<feature type="chain" id="PRO_0000330729" description="D-aspartate oxidase">
    <location>
        <begin position="1"/>
        <end position="341"/>
    </location>
</feature>
<feature type="short sequence motif" description="Microbody targeting signal" evidence="4">
    <location>
        <begin position="339"/>
        <end position="341"/>
    </location>
</feature>
<feature type="binding site" evidence="3">
    <location>
        <position position="36"/>
    </location>
    <ligand>
        <name>FAD</name>
        <dbReference type="ChEBI" id="CHEBI:57692"/>
    </ligand>
</feature>
<feature type="binding site" evidence="3">
    <location>
        <position position="37"/>
    </location>
    <ligand>
        <name>FAD</name>
        <dbReference type="ChEBI" id="CHEBI:57692"/>
    </ligand>
</feature>
<feature type="binding site" evidence="3">
    <location>
        <position position="43"/>
    </location>
    <ligand>
        <name>FAD</name>
        <dbReference type="ChEBI" id="CHEBI:57692"/>
    </ligand>
</feature>
<feature type="binding site" evidence="3">
    <location>
        <position position="44"/>
    </location>
    <ligand>
        <name>FAD</name>
        <dbReference type="ChEBI" id="CHEBI:57692"/>
    </ligand>
</feature>
<feature type="binding site" evidence="3">
    <location>
        <position position="50"/>
    </location>
    <ligand>
        <name>FAD</name>
        <dbReference type="ChEBI" id="CHEBI:57692"/>
    </ligand>
</feature>
<feature type="binding site" evidence="3">
    <location>
        <position position="307"/>
    </location>
    <ligand>
        <name>FAD</name>
        <dbReference type="ChEBI" id="CHEBI:57692"/>
    </ligand>
</feature>
<feature type="binding site" evidence="3">
    <location>
        <position position="311"/>
    </location>
    <ligand>
        <name>FAD</name>
        <dbReference type="ChEBI" id="CHEBI:57692"/>
    </ligand>
</feature>
<feature type="sequence conflict" description="In Ref. 1; BAF47961." evidence="10" ref="1">
    <original>C</original>
    <variation>Y</variation>
    <location>
        <position position="141"/>
    </location>
</feature>
<feature type="sequence conflict" description="In Ref. 1; BAF47961." evidence="10" ref="1">
    <original>N</original>
    <variation>D</variation>
    <location>
        <position position="177"/>
    </location>
</feature>
<feature type="sequence conflict" description="In Ref. 1; BAF47961." evidence="10" ref="1">
    <original>E</original>
    <variation>D</variation>
    <location>
        <position position="195"/>
    </location>
</feature>
<feature type="sequence conflict" description="In Ref. 1; BAF47961." evidence="10" ref="1">
    <original>I</original>
    <variation>L</variation>
    <location>
        <position position="228"/>
    </location>
</feature>
<accession>A3KCL7</accession>
<accession>A0A8D0SGQ9</accession>
<accession>F1RT00</accession>
<gene>
    <name type="primary">DDO</name>
</gene>
<evidence type="ECO:0000250" key="1">
    <source>
        <dbReference type="UniProtKB" id="D3ZDM7"/>
    </source>
</evidence>
<evidence type="ECO:0000250" key="2">
    <source>
        <dbReference type="UniProtKB" id="Q922Z0"/>
    </source>
</evidence>
<evidence type="ECO:0000250" key="3">
    <source>
        <dbReference type="UniProtKB" id="Q99489"/>
    </source>
</evidence>
<evidence type="ECO:0000255" key="4"/>
<evidence type="ECO:0000269" key="5">
    <source>
    </source>
</evidence>
<evidence type="ECO:0000269" key="6">
    <source>
    </source>
</evidence>
<evidence type="ECO:0000269" key="7">
    <source>
    </source>
</evidence>
<evidence type="ECO:0000269" key="8">
    <source>
    </source>
</evidence>
<evidence type="ECO:0000269" key="9">
    <source>
    </source>
</evidence>
<evidence type="ECO:0000305" key="10"/>
<evidence type="ECO:0000305" key="11">
    <source>
    </source>
</evidence>
<evidence type="ECO:0000305" key="12">
    <source>
    </source>
</evidence>
<evidence type="ECO:0000312" key="13">
    <source>
        <dbReference type="EMBL" id="BAF47961.1"/>
    </source>
</evidence>
<evidence type="ECO:0000312" key="14">
    <source>
        <dbReference type="Proteomes" id="UP000008227"/>
    </source>
</evidence>
<proteinExistence type="evidence at protein level"/>
<keyword id="KW-0963">Cytoplasm</keyword>
<keyword id="KW-0274">FAD</keyword>
<keyword id="KW-0285">Flavoprotein</keyword>
<keyword id="KW-0560">Oxidoreductase</keyword>
<keyword id="KW-0576">Peroxisome</keyword>
<keyword id="KW-1185">Reference proteome</keyword>
<organism>
    <name type="scientific">Sus scrofa</name>
    <name type="common">Pig</name>
    <dbReference type="NCBI Taxonomy" id="9823"/>
    <lineage>
        <taxon>Eukaryota</taxon>
        <taxon>Metazoa</taxon>
        <taxon>Chordata</taxon>
        <taxon>Craniata</taxon>
        <taxon>Vertebrata</taxon>
        <taxon>Euteleostomi</taxon>
        <taxon>Mammalia</taxon>
        <taxon>Eutheria</taxon>
        <taxon>Laurasiatheria</taxon>
        <taxon>Artiodactyla</taxon>
        <taxon>Suina</taxon>
        <taxon>Suidae</taxon>
        <taxon>Sus</taxon>
    </lineage>
</organism>
<sequence length="341" mass="37269">MDTVRIAVVGAGVMGLSTAVCIFKLVPGCSITVISDKFTPETTSDVAAGMLIPPVYPDTPIHKQKQWFKDTFDHLFAIANSAEAKDAGVLLVSGWQIFQSAPTEEVPFWADVVLGFRKMTKNELKKFPQHVCGQAFTTLKCEGPTYLPWLEKRVKGSGGLVLTRRVEDLWELHPSFNIVVNCSGLGSKQLVGDMEIFPVRGQVLKVQAPWVKHFIRDGSGLTYIYPGIANVTLGGTRQKGDWNLSPNAEISKQILSRCCALEPSLRGACDIREKVGLRPSRPGVRLEKELLVQGSQRLPVVHNYGHGSGGIAMHWGTALEAARLVSECVQALRTPAPKSKL</sequence>
<name>OXDD_PIG</name>
<protein>
    <recommendedName>
        <fullName>D-aspartate oxidase</fullName>
        <shortName>DASOX</shortName>
        <shortName evidence="3">DASPO</shortName>
        <shortName>DDO</shortName>
        <ecNumber evidence="5 6">1.4.3.1</ecNumber>
    </recommendedName>
</protein>
<dbReference type="EC" id="1.4.3.1" evidence="5 6"/>
<dbReference type="EMBL" id="AB271762">
    <property type="protein sequence ID" value="BAF47961.1"/>
    <property type="molecule type" value="mRNA"/>
</dbReference>
<dbReference type="RefSeq" id="NP_001090895.1">
    <property type="nucleotide sequence ID" value="NM_001097426.1"/>
</dbReference>
<dbReference type="SMR" id="A3KCL7"/>
<dbReference type="FunCoup" id="A3KCL7">
    <property type="interactions" value="306"/>
</dbReference>
<dbReference type="STRING" id="9823.ENSSSCP00000004749"/>
<dbReference type="PaxDb" id="9823-ENSSSCP00000004749"/>
<dbReference type="PeptideAtlas" id="A3KCL7"/>
<dbReference type="Ensembl" id="ENSSSCT00000004864.4">
    <property type="protein sequence ID" value="ENSSSCP00000004749.2"/>
    <property type="gene ID" value="ENSSSCG00000004401.5"/>
</dbReference>
<dbReference type="Ensembl" id="ENSSSCT00005060265">
    <property type="protein sequence ID" value="ENSSSCP00005037210"/>
    <property type="gene ID" value="ENSSSCG00005037625"/>
</dbReference>
<dbReference type="Ensembl" id="ENSSSCT00090054156">
    <property type="protein sequence ID" value="ENSSSCP00090033660"/>
    <property type="gene ID" value="ENSSSCG00090030595"/>
</dbReference>
<dbReference type="Ensembl" id="ENSSSCT00105069517">
    <property type="protein sequence ID" value="ENSSSCP00105049235"/>
    <property type="gene ID" value="ENSSSCG00105036486"/>
</dbReference>
<dbReference type="Ensembl" id="ENSSSCT00110004239">
    <property type="protein sequence ID" value="ENSSSCP00110003249"/>
    <property type="gene ID" value="ENSSSCG00110002079"/>
</dbReference>
<dbReference type="Ensembl" id="ENSSSCT00115000299">
    <property type="protein sequence ID" value="ENSSSCP00115000253"/>
    <property type="gene ID" value="ENSSSCG00115000230"/>
</dbReference>
<dbReference type="GeneID" id="100037287"/>
<dbReference type="KEGG" id="ssc:100037287"/>
<dbReference type="CTD" id="8528"/>
<dbReference type="VGNC" id="VGNC:103079">
    <property type="gene designation" value="DDO"/>
</dbReference>
<dbReference type="eggNOG" id="KOG3923">
    <property type="taxonomic scope" value="Eukaryota"/>
</dbReference>
<dbReference type="GeneTree" id="ENSGT00390000018635"/>
<dbReference type="HOGENOM" id="CLU_034311_0_2_1"/>
<dbReference type="InParanoid" id="A3KCL7"/>
<dbReference type="OMA" id="DLWELQP"/>
<dbReference type="OrthoDB" id="2015447at2759"/>
<dbReference type="TreeFam" id="TF313887"/>
<dbReference type="BioCyc" id="MetaCyc:MONOMER-14481"/>
<dbReference type="BRENDA" id="1.4.3.1">
    <property type="organism ID" value="6170"/>
</dbReference>
<dbReference type="Reactome" id="R-SSC-389661">
    <property type="pathway name" value="Glyoxylate metabolism and glycine degradation"/>
</dbReference>
<dbReference type="Reactome" id="R-SSC-9033241">
    <property type="pathway name" value="Peroxisomal protein import"/>
</dbReference>
<dbReference type="Proteomes" id="UP000008227">
    <property type="component" value="Chromosome 1"/>
</dbReference>
<dbReference type="Proteomes" id="UP000314985">
    <property type="component" value="Unplaced"/>
</dbReference>
<dbReference type="Proteomes" id="UP000694570">
    <property type="component" value="Unplaced"/>
</dbReference>
<dbReference type="Proteomes" id="UP000694571">
    <property type="component" value="Unplaced"/>
</dbReference>
<dbReference type="Proteomes" id="UP000694720">
    <property type="component" value="Unplaced"/>
</dbReference>
<dbReference type="Proteomes" id="UP000694722">
    <property type="component" value="Unplaced"/>
</dbReference>
<dbReference type="Proteomes" id="UP000694723">
    <property type="component" value="Unplaced"/>
</dbReference>
<dbReference type="Proteomes" id="UP000694724">
    <property type="component" value="Unplaced"/>
</dbReference>
<dbReference type="Proteomes" id="UP000694725">
    <property type="component" value="Unplaced"/>
</dbReference>
<dbReference type="Proteomes" id="UP000694726">
    <property type="component" value="Unplaced"/>
</dbReference>
<dbReference type="Proteomes" id="UP000694727">
    <property type="component" value="Unplaced"/>
</dbReference>
<dbReference type="Proteomes" id="UP000694728">
    <property type="component" value="Unplaced"/>
</dbReference>
<dbReference type="Bgee" id="ENSSSCG00000004401">
    <property type="expression patterns" value="Expressed in metanephros cortex and 40 other cell types or tissues"/>
</dbReference>
<dbReference type="GO" id="GO:0005737">
    <property type="term" value="C:cytoplasm"/>
    <property type="evidence" value="ECO:0000318"/>
    <property type="project" value="GO_Central"/>
</dbReference>
<dbReference type="GO" id="GO:0005829">
    <property type="term" value="C:cytosol"/>
    <property type="evidence" value="ECO:0007669"/>
    <property type="project" value="UniProtKB-SubCell"/>
</dbReference>
<dbReference type="GO" id="GO:0005782">
    <property type="term" value="C:peroxisomal matrix"/>
    <property type="evidence" value="ECO:0000250"/>
    <property type="project" value="UniProtKB"/>
</dbReference>
<dbReference type="GO" id="GO:0005777">
    <property type="term" value="C:peroxisome"/>
    <property type="evidence" value="ECO:0000314"/>
    <property type="project" value="UniProtKB"/>
</dbReference>
<dbReference type="GO" id="GO:0008445">
    <property type="term" value="F:D-aspartate oxidase activity"/>
    <property type="evidence" value="ECO:0000314"/>
    <property type="project" value="UniProtKB"/>
</dbReference>
<dbReference type="GO" id="GO:0047821">
    <property type="term" value="F:D-glutamate oxidase activity"/>
    <property type="evidence" value="ECO:0007669"/>
    <property type="project" value="RHEA"/>
</dbReference>
<dbReference type="GO" id="GO:0071949">
    <property type="term" value="F:FAD binding"/>
    <property type="evidence" value="ECO:0000250"/>
    <property type="project" value="UniProtKB"/>
</dbReference>
<dbReference type="GO" id="GO:0006531">
    <property type="term" value="P:aspartate metabolic process"/>
    <property type="evidence" value="ECO:0007669"/>
    <property type="project" value="Ensembl"/>
</dbReference>
<dbReference type="GO" id="GO:0019478">
    <property type="term" value="P:D-amino acid catabolic process"/>
    <property type="evidence" value="ECO:0000314"/>
    <property type="project" value="UniProtKB"/>
</dbReference>
<dbReference type="GO" id="GO:0007625">
    <property type="term" value="P:grooming behavior"/>
    <property type="evidence" value="ECO:0007669"/>
    <property type="project" value="Ensembl"/>
</dbReference>
<dbReference type="GO" id="GO:0042445">
    <property type="term" value="P:hormone metabolic process"/>
    <property type="evidence" value="ECO:0007669"/>
    <property type="project" value="Ensembl"/>
</dbReference>
<dbReference type="GO" id="GO:0007320">
    <property type="term" value="P:insemination"/>
    <property type="evidence" value="ECO:0007669"/>
    <property type="project" value="Ensembl"/>
</dbReference>
<dbReference type="GO" id="GO:0050877">
    <property type="term" value="P:nervous system process"/>
    <property type="evidence" value="ECO:0000250"/>
    <property type="project" value="UniProtKB"/>
</dbReference>
<dbReference type="GO" id="GO:0010646">
    <property type="term" value="P:regulation of cell communication"/>
    <property type="evidence" value="ECO:0007669"/>
    <property type="project" value="Ensembl"/>
</dbReference>
<dbReference type="FunFam" id="3.30.9.10:FF:000004">
    <property type="entry name" value="D-amino-acid oxidase"/>
    <property type="match status" value="1"/>
</dbReference>
<dbReference type="FunFam" id="3.40.50.720:FF:000551">
    <property type="entry name" value="D-aspartate oxidase"/>
    <property type="match status" value="1"/>
</dbReference>
<dbReference type="Gene3D" id="3.30.9.10">
    <property type="entry name" value="D-Amino Acid Oxidase, subunit A, domain 2"/>
    <property type="match status" value="1"/>
</dbReference>
<dbReference type="Gene3D" id="3.40.50.720">
    <property type="entry name" value="NAD(P)-binding Rossmann-like Domain"/>
    <property type="match status" value="1"/>
</dbReference>
<dbReference type="InterPro" id="IPR006181">
    <property type="entry name" value="D-amino_acid_oxidase_CS"/>
</dbReference>
<dbReference type="InterPro" id="IPR023209">
    <property type="entry name" value="DAO"/>
</dbReference>
<dbReference type="InterPro" id="IPR006076">
    <property type="entry name" value="FAD-dep_OxRdtase"/>
</dbReference>
<dbReference type="PANTHER" id="PTHR11530">
    <property type="entry name" value="D-AMINO ACID OXIDASE"/>
    <property type="match status" value="1"/>
</dbReference>
<dbReference type="PANTHER" id="PTHR11530:SF11">
    <property type="entry name" value="D-ASPARTATE OXIDASE"/>
    <property type="match status" value="1"/>
</dbReference>
<dbReference type="Pfam" id="PF01266">
    <property type="entry name" value="DAO"/>
    <property type="match status" value="1"/>
</dbReference>
<dbReference type="PIRSF" id="PIRSF000189">
    <property type="entry name" value="D-aa_oxidase"/>
    <property type="match status" value="1"/>
</dbReference>
<dbReference type="SUPFAM" id="SSF54373">
    <property type="entry name" value="FAD-linked reductases, C-terminal domain"/>
    <property type="match status" value="1"/>
</dbReference>
<dbReference type="SUPFAM" id="SSF51971">
    <property type="entry name" value="Nucleotide-binding domain"/>
    <property type="match status" value="1"/>
</dbReference>
<dbReference type="PROSITE" id="PS00677">
    <property type="entry name" value="DAO"/>
    <property type="match status" value="1"/>
</dbReference>
<reference evidence="13" key="1">
    <citation type="journal article" date="2007" name="J. Biochem.">
        <title>Functional and structural characterization of D-aspartate oxidase from porcine kidney: non-Michaelis kinetics due to substrate activation.</title>
        <authorList>
            <person name="Yamamoto A."/>
            <person name="Tanaka H."/>
            <person name="Ishida T."/>
            <person name="Horiike K."/>
        </authorList>
    </citation>
    <scope>NUCLEOTIDE SEQUENCE [MRNA]</scope>
    <scope>FUNCTION</scope>
    <scope>CATALYTIC ACTIVITY</scope>
    <scope>COFACTOR</scope>
    <scope>BIOPHYSICOCHEMICAL PROPERTIES</scope>
    <scope>MASS SPECTROMETRY</scope>
    <scope>SUBUNIT</scope>
</reference>
<reference evidence="14" key="2">
    <citation type="submission" date="2009-11" db="EMBL/GenBank/DDBJ databases">
        <authorList>
            <consortium name="Porcine genome sequencing project"/>
        </authorList>
    </citation>
    <scope>NUCLEOTIDE SEQUENCE [LARGE SCALE GENOMIC DNA]</scope>
    <source>
        <strain evidence="14">Duroc</strain>
    </source>
</reference>
<reference key="3">
    <citation type="journal article" date="2006" name="J. Biochem.">
        <title>Engineering the substrate specificity of porcine kidney D-amino acid oxidase by mutagenesis of the 'active-site lid'.</title>
        <authorList>
            <person name="Setoyama C."/>
            <person name="Nishina Y."/>
            <person name="Mizutani H."/>
            <person name="Miyahara I."/>
            <person name="Hirotsu K."/>
            <person name="Kamiya N."/>
            <person name="Shiga K."/>
            <person name="Miura R."/>
        </authorList>
    </citation>
    <scope>FUNCTION</scope>
    <scope>CATALYTIC ACTIVITY</scope>
    <scope>BIOPHYSICOCHEMICAL PROPERTIES</scope>
</reference>
<reference key="4">
    <citation type="journal article" date="2010" name="J. Neuroendocrinol.">
        <title>D-aspartate oxidase localisation in pituitary and pineal glands of the female pig.</title>
        <authorList>
            <person name="Yamamoto A."/>
            <person name="Tanaka H."/>
            <person name="Ishida T."/>
            <person name="Horiike K."/>
        </authorList>
    </citation>
    <scope>SUBCELLULAR LOCATION</scope>
    <scope>TISSUE SPECIFICITY</scope>
</reference>
<reference key="5">
    <citation type="journal article" date="2011" name="Amino Acids">
        <title>Immunohistochemical localization of D-aspartate oxidase in porcine peripheral tissues.</title>
        <authorList>
            <person name="Yamamoto A."/>
            <person name="Tanaka H."/>
            <person name="Ishida T."/>
            <person name="Horiike K."/>
        </authorList>
    </citation>
    <scope>SUBCELLULAR LOCATION</scope>
    <scope>TISSUE SPECIFICITY</scope>
</reference>
<reference key="6">
    <citation type="journal article" date="2012" name="Acta Crystallogr. F">
        <title>Crystallization and preliminary crystallographic analysis of D-aspartate oxidase from porcine kidney.</title>
        <authorList>
            <person name="Senda M."/>
            <person name="Yamamoto A."/>
            <person name="Tanaka H."/>
            <person name="Ishida T."/>
            <person name="Horiike K."/>
            <person name="Senda T."/>
        </authorList>
    </citation>
    <scope>SUBUNIT</scope>
</reference>